<comment type="function">
    <text evidence="4 6">Controls several aspects of neuronal morphogenesis; essential for optic lobe development, EcR-B1 expression in larval brains, mushroom body remodeling, dorsal neuron morphogenesis and motoneuron axon guidance. Ligands Actbeta and daw act redundantly through the Activin receptor Babo and its transcriptional mediator Smad2 (Smox), to regulate neuroblast numbers and proliferation rates in the developing larval brain.</text>
</comment>
<comment type="subunit">
    <text evidence="8">Homodimer or heterodimer; disulfide-linked.</text>
</comment>
<comment type="subcellular location">
    <subcellularLocation>
        <location evidence="8">Secreted</location>
    </subcellularLocation>
</comment>
<comment type="tissue specificity">
    <text evidence="4 6">Widely expressed in larval brains.</text>
</comment>
<comment type="developmental stage">
    <text evidence="7">Expressed in embryonic, larval and adult stages.</text>
</comment>
<comment type="PTM">
    <text evidence="5">Cleaved in vitro by metalloproteases tok and tld to produce a 30 kDa product.</text>
</comment>
<comment type="disruption phenotype">
    <text evidence="6">Development of larvae with small brains and aberrant photoreceptor axon targeting.</text>
</comment>
<comment type="similarity">
    <text evidence="8">Belongs to the TGF-beta family.</text>
</comment>
<keyword id="KW-0165">Cleavage on pair of basic residues</keyword>
<keyword id="KW-0217">Developmental protein</keyword>
<keyword id="KW-1015">Disulfide bond</keyword>
<keyword id="KW-0325">Glycoprotein</keyword>
<keyword id="KW-0339">Growth factor</keyword>
<keyword id="KW-1185">Reference proteome</keyword>
<keyword id="KW-0964">Secreted</keyword>
<keyword id="KW-0732">Signal</keyword>
<accession>O61643</accession>
<accession>Q8MRB1</accession>
<accession>Q8WR60</accession>
<accession>Q9V497</accession>
<gene>
    <name type="primary">Actbeta</name>
    <name type="synonym">activin-beta</name>
    <name type="ORF">CG11062</name>
</gene>
<sequence>MRFAFDSNHSQSGAPFKGSRCFFNCQCICCRQGCCVVVVKCCCCFNLNCCNSLGSRKSFPQPAAMRKKVADLEVLRVSRFVAVILVLARWVTAVATLLTSCILLDIFSVPGQSGVADRSQASSRTVHVSVPTTPNETPSSTSETKLKLLYGYTSYDINNDQQVKSNNLCRVLCKSRNRKRQRRRRRRRNHRRRRHRYTKRLHHLMQDNMSGFEQRLNFSDAKCQSLETNYGTNYDLVQGGKLFSQSERSLLVSPLREIEAPWPAIHGSMRNCSKIKRNRANLIWLLIGLVWFEVKLINCNGISSSNYYASNLESHKGCTLCHESGKPNIYTDKDNPHTDYNIYNKYHSNNNFNKKTNQPHNNIAPSDEVRLESIKRQILTKLGLSHKPNVSHPLPKQFIWETIYRVDGGRMIPNNAFGSSGKNLDQKTIKLRAFASPGSHLFNGRGGRTDQRSERDPSHHKYRSPFDFTFNISKNNVYGKVLRNRSLERIDKKNSFLNGWTENRQLKINSQIASMPIELKSHHNSSPKELKSGAVRKVNGINGTQMNENALKKSTYPIDINHSIDNKTHTGKNGEMSHNDYEYFNDYSVQTHDKNRYHEGRSSIGYQPAIHNIEYENQKGHHESFADDHENIDHEDFFGNTQEIITFAEEGTQYRQYRILEFSAQNRRVPSQKLSIRSAQIHIRIDKPHSLWIEKAKSLPEKHLLNTKRKWGANKPHHRIKIWVFQLSTSINITEKGIDKAIIFRASFQVDPKNLGWQKFDLTDTIREWYGHTSHEKLRLLIDCTGCGGRYSLHLFQTSKLRGNSSDYLSTNPNRPFLVLHTESSRTRRVRRRAVDCGGALNGQCCKESFYVSFKALGWDDWIIAPRGYFANYCRGDCTGSFRTPDTFQTFHAHFIEEYRKMGLMNGMRPCCAPIKFSSMSLIYYGDDGIIKRDLPKMVVDECGCP</sequence>
<feature type="signal peptide" evidence="2">
    <location>
        <begin position="1"/>
        <end status="unknown"/>
    </location>
</feature>
<feature type="propeptide" id="PRO_0000033742" evidence="2">
    <location>
        <begin status="unknown"/>
        <end position="830"/>
    </location>
</feature>
<feature type="chain" id="PRO_0000033743" description="Inhibin beta chain">
    <location>
        <begin position="834"/>
        <end position="946"/>
    </location>
</feature>
<feature type="region of interest" description="Disordered" evidence="3">
    <location>
        <begin position="115"/>
        <end position="142"/>
    </location>
</feature>
<feature type="region of interest" description="Disordered" evidence="3">
    <location>
        <begin position="174"/>
        <end position="194"/>
    </location>
</feature>
<feature type="region of interest" description="Disordered" evidence="3">
    <location>
        <begin position="436"/>
        <end position="462"/>
    </location>
</feature>
<feature type="compositionally biased region" description="Low complexity" evidence="3">
    <location>
        <begin position="128"/>
        <end position="142"/>
    </location>
</feature>
<feature type="compositionally biased region" description="Basic and acidic residues" evidence="3">
    <location>
        <begin position="447"/>
        <end position="459"/>
    </location>
</feature>
<feature type="site" description="Cleavage; by tok and tld" evidence="5">
    <location>
        <begin position="585"/>
        <end position="586"/>
    </location>
</feature>
<feature type="glycosylation site" description="N-linked (GlcNAc...) asparagine" evidence="2">
    <location>
        <position position="208"/>
    </location>
</feature>
<feature type="glycosylation site" description="N-linked (GlcNAc...) asparagine" evidence="2">
    <location>
        <position position="217"/>
    </location>
</feature>
<feature type="glycosylation site" description="N-linked (GlcNAc...) asparagine" evidence="2">
    <location>
        <position position="271"/>
    </location>
</feature>
<feature type="glycosylation site" description="N-linked (GlcNAc...) asparagine" evidence="2">
    <location>
        <position position="389"/>
    </location>
</feature>
<feature type="glycosylation site" description="N-linked (GlcNAc...) asparagine" evidence="2">
    <location>
        <position position="471"/>
    </location>
</feature>
<feature type="glycosylation site" description="N-linked (GlcNAc...) asparagine" evidence="2">
    <location>
        <position position="484"/>
    </location>
</feature>
<feature type="glycosylation site" description="N-linked (GlcNAc...) asparagine" evidence="2">
    <location>
        <position position="542"/>
    </location>
</feature>
<feature type="glycosylation site" description="N-linked (GlcNAc...) asparagine" evidence="2">
    <location>
        <position position="561"/>
    </location>
</feature>
<feature type="glycosylation site" description="N-linked (GlcNAc...) asparagine" evidence="2">
    <location>
        <position position="566"/>
    </location>
</feature>
<feature type="glycosylation site" description="N-linked (GlcNAc...) asparagine" evidence="2">
    <location>
        <position position="732"/>
    </location>
</feature>
<feature type="glycosylation site" description="N-linked (GlcNAc...) asparagine" evidence="2">
    <location>
        <position position="804"/>
    </location>
</feature>
<feature type="disulfide bond" evidence="1">
    <location>
        <begin position="837"/>
        <end position="846"/>
    </location>
</feature>
<feature type="disulfide bond" evidence="1">
    <location>
        <begin position="845"/>
        <end position="912"/>
    </location>
</feature>
<feature type="disulfide bond" evidence="1">
    <location>
        <begin position="874"/>
        <end position="943"/>
    </location>
</feature>
<feature type="disulfide bond" evidence="1">
    <location>
        <begin position="878"/>
        <end position="945"/>
    </location>
</feature>
<feature type="disulfide bond" description="Interchain" evidence="1">
    <location>
        <position position="911"/>
    </location>
</feature>
<feature type="mutagenesis site" description="Abolishes cleavage by tok." evidence="5">
    <original>YFND</original>
    <variation>AAAA</variation>
    <location>
        <begin position="583"/>
        <end position="586"/>
    </location>
</feature>
<feature type="sequence conflict" description="In Ref. 4; AAL51005." evidence="8" ref="4">
    <original>I</original>
    <variation>V</variation>
    <location>
        <position position="275"/>
    </location>
</feature>
<feature type="sequence conflict" description="In Ref. 4; AAL51005." evidence="8" ref="4">
    <original>I</original>
    <variation>T</variation>
    <location>
        <position position="517"/>
    </location>
</feature>
<organism>
    <name type="scientific">Drosophila melanogaster</name>
    <name type="common">Fruit fly</name>
    <dbReference type="NCBI Taxonomy" id="7227"/>
    <lineage>
        <taxon>Eukaryota</taxon>
        <taxon>Metazoa</taxon>
        <taxon>Ecdysozoa</taxon>
        <taxon>Arthropoda</taxon>
        <taxon>Hexapoda</taxon>
        <taxon>Insecta</taxon>
        <taxon>Pterygota</taxon>
        <taxon>Neoptera</taxon>
        <taxon>Endopterygota</taxon>
        <taxon>Diptera</taxon>
        <taxon>Brachycera</taxon>
        <taxon>Muscomorpha</taxon>
        <taxon>Ephydroidea</taxon>
        <taxon>Drosophilidae</taxon>
        <taxon>Drosophila</taxon>
        <taxon>Sophophora</taxon>
    </lineage>
</organism>
<evidence type="ECO:0000250" key="1"/>
<evidence type="ECO:0000255" key="2"/>
<evidence type="ECO:0000256" key="3">
    <source>
        <dbReference type="SAM" id="MobiDB-lite"/>
    </source>
</evidence>
<evidence type="ECO:0000269" key="4">
    <source>
    </source>
</evidence>
<evidence type="ECO:0000269" key="5">
    <source>
    </source>
</evidence>
<evidence type="ECO:0000269" key="6">
    <source>
    </source>
</evidence>
<evidence type="ECO:0000269" key="7">
    <source>
    </source>
</evidence>
<evidence type="ECO:0000305" key="8"/>
<name>INHB_DROME</name>
<dbReference type="EMBL" id="AE014135">
    <property type="protein sequence ID" value="AAF59386.3"/>
    <property type="molecule type" value="Genomic_DNA"/>
</dbReference>
<dbReference type="EMBL" id="AY121686">
    <property type="protein sequence ID" value="AAM52013.1"/>
    <property type="molecule type" value="mRNA"/>
</dbReference>
<dbReference type="EMBL" id="AF454392">
    <property type="protein sequence ID" value="AAL51005.1"/>
    <property type="molecule type" value="mRNA"/>
</dbReference>
<dbReference type="EMBL" id="AF054822">
    <property type="protein sequence ID" value="AAC39083.1"/>
    <property type="molecule type" value="Genomic_DNA"/>
</dbReference>
<dbReference type="RefSeq" id="NP_651942.2">
    <property type="nucleotide sequence ID" value="NM_143685.3"/>
</dbReference>
<dbReference type="SMR" id="O61643"/>
<dbReference type="BioGRID" id="68652">
    <property type="interactions" value="8"/>
</dbReference>
<dbReference type="FunCoup" id="O61643">
    <property type="interactions" value="76"/>
</dbReference>
<dbReference type="IntAct" id="O61643">
    <property type="interactions" value="2"/>
</dbReference>
<dbReference type="STRING" id="7227.FBpp0088273"/>
<dbReference type="GlyCosmos" id="O61643">
    <property type="glycosylation" value="11 sites, No reported glycans"/>
</dbReference>
<dbReference type="GlyGen" id="O61643">
    <property type="glycosylation" value="11 sites"/>
</dbReference>
<dbReference type="PaxDb" id="7227-FBpp0088273"/>
<dbReference type="EnsemblMetazoa" id="FBtr0089209">
    <property type="protein sequence ID" value="FBpp0088273"/>
    <property type="gene ID" value="FBgn0024913"/>
</dbReference>
<dbReference type="GeneID" id="43826"/>
<dbReference type="KEGG" id="dme:Dmel_CG11062"/>
<dbReference type="AGR" id="FB:FBgn0024913"/>
<dbReference type="CTD" id="43826"/>
<dbReference type="FlyBase" id="FBgn0024913">
    <property type="gene designation" value="Actbeta"/>
</dbReference>
<dbReference type="VEuPathDB" id="VectorBase:FBgn0024913"/>
<dbReference type="eggNOG" id="KOG3900">
    <property type="taxonomic scope" value="Eukaryota"/>
</dbReference>
<dbReference type="HOGENOM" id="CLU_013135_0_0_1"/>
<dbReference type="InParanoid" id="O61643"/>
<dbReference type="OMA" id="KQFIWET"/>
<dbReference type="OrthoDB" id="6516235at2759"/>
<dbReference type="PhylomeDB" id="O61643"/>
<dbReference type="Reactome" id="R-DME-1502540">
    <property type="pathway name" value="Signaling by Activin"/>
</dbReference>
<dbReference type="Reactome" id="R-DME-201451">
    <property type="pathway name" value="Signaling by BMP"/>
</dbReference>
<dbReference type="Reactome" id="R-DME-2473224">
    <property type="pathway name" value="Antagonism of Activin by Follistatin"/>
</dbReference>
<dbReference type="BioGRID-ORCS" id="43826">
    <property type="hits" value="0 hits in 3 CRISPR screens"/>
</dbReference>
<dbReference type="GenomeRNAi" id="43826"/>
<dbReference type="PRO" id="PR:O61643"/>
<dbReference type="Proteomes" id="UP000000803">
    <property type="component" value="Chromosome 4"/>
</dbReference>
<dbReference type="Bgee" id="FBgn0024913">
    <property type="expression patterns" value="Expressed in medullary intrinsic neuron Mi1 (Drosophila) in insect head and 188 other cell types or tissues"/>
</dbReference>
<dbReference type="GO" id="GO:0005615">
    <property type="term" value="C:extracellular space"/>
    <property type="evidence" value="ECO:0000318"/>
    <property type="project" value="GO_Central"/>
</dbReference>
<dbReference type="GO" id="GO:0005125">
    <property type="term" value="F:cytokine activity"/>
    <property type="evidence" value="ECO:0000318"/>
    <property type="project" value="GO_Central"/>
</dbReference>
<dbReference type="GO" id="GO:0008083">
    <property type="term" value="F:growth factor activity"/>
    <property type="evidence" value="ECO:0007669"/>
    <property type="project" value="UniProtKB-KW"/>
</dbReference>
<dbReference type="GO" id="GO:0032924">
    <property type="term" value="P:activin receptor signaling pathway"/>
    <property type="evidence" value="ECO:0000314"/>
    <property type="project" value="FlyBase"/>
</dbReference>
<dbReference type="GO" id="GO:0042593">
    <property type="term" value="P:glucose homeostasis"/>
    <property type="evidence" value="ECO:0000315"/>
    <property type="project" value="FlyBase"/>
</dbReference>
<dbReference type="GO" id="GO:0016319">
    <property type="term" value="P:mushroom body development"/>
    <property type="evidence" value="ECO:0000315"/>
    <property type="project" value="FlyBase"/>
</dbReference>
<dbReference type="GO" id="GO:0045819">
    <property type="term" value="P:positive regulation of glycogen catabolic process"/>
    <property type="evidence" value="ECO:0000315"/>
    <property type="project" value="FlyBase"/>
</dbReference>
<dbReference type="GO" id="GO:0045572">
    <property type="term" value="P:positive regulation of imaginal disc growth"/>
    <property type="evidence" value="ECO:0000315"/>
    <property type="project" value="FlyBase"/>
</dbReference>
<dbReference type="GO" id="GO:0002052">
    <property type="term" value="P:positive regulation of neuroblast proliferation"/>
    <property type="evidence" value="ECO:0000316"/>
    <property type="project" value="FlyBase"/>
</dbReference>
<dbReference type="GO" id="GO:0045464">
    <property type="term" value="P:R8 cell fate specification"/>
    <property type="evidence" value="ECO:0000315"/>
    <property type="project" value="FlyBase"/>
</dbReference>
<dbReference type="GO" id="GO:0044719">
    <property type="term" value="P:regulation of imaginal disc-derived wing size"/>
    <property type="evidence" value="ECO:0000315"/>
    <property type="project" value="FlyBase"/>
</dbReference>
<dbReference type="GO" id="GO:0050803">
    <property type="term" value="P:regulation of synapse structure or activity"/>
    <property type="evidence" value="ECO:0000315"/>
    <property type="project" value="FlyBase"/>
</dbReference>
<dbReference type="GO" id="GO:0009749">
    <property type="term" value="P:response to glucose"/>
    <property type="evidence" value="ECO:0000270"/>
    <property type="project" value="FlyBase"/>
</dbReference>
<dbReference type="CDD" id="cd13752">
    <property type="entry name" value="TGF_beta_INHB"/>
    <property type="match status" value="1"/>
</dbReference>
<dbReference type="FunFam" id="2.10.90.10:FF:000005">
    <property type="entry name" value="Inhibin beta A chain"/>
    <property type="match status" value="1"/>
</dbReference>
<dbReference type="FunFam" id="2.60.120.970:FF:000044">
    <property type="entry name" value="Inhibin beta chain"/>
    <property type="match status" value="1"/>
</dbReference>
<dbReference type="Gene3D" id="2.60.120.970">
    <property type="match status" value="2"/>
</dbReference>
<dbReference type="Gene3D" id="2.10.90.10">
    <property type="entry name" value="Cystine-knot cytokines"/>
    <property type="match status" value="1"/>
</dbReference>
<dbReference type="InterPro" id="IPR029034">
    <property type="entry name" value="Cystine-knot_cytokine"/>
</dbReference>
<dbReference type="InterPro" id="IPR001839">
    <property type="entry name" value="TGF-b_C"/>
</dbReference>
<dbReference type="InterPro" id="IPR015615">
    <property type="entry name" value="TGF-beta-rel"/>
</dbReference>
<dbReference type="InterPro" id="IPR017948">
    <property type="entry name" value="TGFb_CS"/>
</dbReference>
<dbReference type="PANTHER" id="PTHR11848:SF309">
    <property type="entry name" value="INHIBIN BETA CHAIN"/>
    <property type="match status" value="1"/>
</dbReference>
<dbReference type="PANTHER" id="PTHR11848">
    <property type="entry name" value="TGF-BETA FAMILY"/>
    <property type="match status" value="1"/>
</dbReference>
<dbReference type="Pfam" id="PF00019">
    <property type="entry name" value="TGF_beta"/>
    <property type="match status" value="1"/>
</dbReference>
<dbReference type="PRINTS" id="PR00669">
    <property type="entry name" value="INHIBINA"/>
</dbReference>
<dbReference type="SMART" id="SM00204">
    <property type="entry name" value="TGFB"/>
    <property type="match status" value="1"/>
</dbReference>
<dbReference type="SUPFAM" id="SSF57501">
    <property type="entry name" value="Cystine-knot cytokines"/>
    <property type="match status" value="1"/>
</dbReference>
<dbReference type="PROSITE" id="PS00250">
    <property type="entry name" value="TGF_BETA_1"/>
    <property type="match status" value="1"/>
</dbReference>
<dbReference type="PROSITE" id="PS51362">
    <property type="entry name" value="TGF_BETA_2"/>
    <property type="match status" value="1"/>
</dbReference>
<proteinExistence type="evidence at protein level"/>
<protein>
    <recommendedName>
        <fullName>Inhibin beta chain</fullName>
    </recommendedName>
    <alternativeName>
        <fullName>Activin beta chain</fullName>
        <shortName>dAct</shortName>
        <shortName>dActivin</shortName>
    </alternativeName>
</protein>
<reference evidence="8" key="1">
    <citation type="journal article" date="2000" name="Science">
        <title>The genome sequence of Drosophila melanogaster.</title>
        <authorList>
            <person name="Adams M.D."/>
            <person name="Celniker S.E."/>
            <person name="Holt R.A."/>
            <person name="Evans C.A."/>
            <person name="Gocayne J.D."/>
            <person name="Amanatides P.G."/>
            <person name="Scherer S.E."/>
            <person name="Li P.W."/>
            <person name="Hoskins R.A."/>
            <person name="Galle R.F."/>
            <person name="George R.A."/>
            <person name="Lewis S.E."/>
            <person name="Richards S."/>
            <person name="Ashburner M."/>
            <person name="Henderson S.N."/>
            <person name="Sutton G.G."/>
            <person name="Wortman J.R."/>
            <person name="Yandell M.D."/>
            <person name="Zhang Q."/>
            <person name="Chen L.X."/>
            <person name="Brandon R.C."/>
            <person name="Rogers Y.-H.C."/>
            <person name="Blazej R.G."/>
            <person name="Champe M."/>
            <person name="Pfeiffer B.D."/>
            <person name="Wan K.H."/>
            <person name="Doyle C."/>
            <person name="Baxter E.G."/>
            <person name="Helt G."/>
            <person name="Nelson C.R."/>
            <person name="Miklos G.L.G."/>
            <person name="Abril J.F."/>
            <person name="Agbayani A."/>
            <person name="An H.-J."/>
            <person name="Andrews-Pfannkoch C."/>
            <person name="Baldwin D."/>
            <person name="Ballew R.M."/>
            <person name="Basu A."/>
            <person name="Baxendale J."/>
            <person name="Bayraktaroglu L."/>
            <person name="Beasley E.M."/>
            <person name="Beeson K.Y."/>
            <person name="Benos P.V."/>
            <person name="Berman B.P."/>
            <person name="Bhandari D."/>
            <person name="Bolshakov S."/>
            <person name="Borkova D."/>
            <person name="Botchan M.R."/>
            <person name="Bouck J."/>
            <person name="Brokstein P."/>
            <person name="Brottier P."/>
            <person name="Burtis K.C."/>
            <person name="Busam D.A."/>
            <person name="Butler H."/>
            <person name="Cadieu E."/>
            <person name="Center A."/>
            <person name="Chandra I."/>
            <person name="Cherry J.M."/>
            <person name="Cawley S."/>
            <person name="Dahlke C."/>
            <person name="Davenport L.B."/>
            <person name="Davies P."/>
            <person name="de Pablos B."/>
            <person name="Delcher A."/>
            <person name="Deng Z."/>
            <person name="Mays A.D."/>
            <person name="Dew I."/>
            <person name="Dietz S.M."/>
            <person name="Dodson K."/>
            <person name="Doup L.E."/>
            <person name="Downes M."/>
            <person name="Dugan-Rocha S."/>
            <person name="Dunkov B.C."/>
            <person name="Dunn P."/>
            <person name="Durbin K.J."/>
            <person name="Evangelista C.C."/>
            <person name="Ferraz C."/>
            <person name="Ferriera S."/>
            <person name="Fleischmann W."/>
            <person name="Fosler C."/>
            <person name="Gabrielian A.E."/>
            <person name="Garg N.S."/>
            <person name="Gelbart W.M."/>
            <person name="Glasser K."/>
            <person name="Glodek A."/>
            <person name="Gong F."/>
            <person name="Gorrell J.H."/>
            <person name="Gu Z."/>
            <person name="Guan P."/>
            <person name="Harris M."/>
            <person name="Harris N.L."/>
            <person name="Harvey D.A."/>
            <person name="Heiman T.J."/>
            <person name="Hernandez J.R."/>
            <person name="Houck J."/>
            <person name="Hostin D."/>
            <person name="Houston K.A."/>
            <person name="Howland T.J."/>
            <person name="Wei M.-H."/>
            <person name="Ibegwam C."/>
            <person name="Jalali M."/>
            <person name="Kalush F."/>
            <person name="Karpen G.H."/>
            <person name="Ke Z."/>
            <person name="Kennison J.A."/>
            <person name="Ketchum K.A."/>
            <person name="Kimmel B.E."/>
            <person name="Kodira C.D."/>
            <person name="Kraft C.L."/>
            <person name="Kravitz S."/>
            <person name="Kulp D."/>
            <person name="Lai Z."/>
            <person name="Lasko P."/>
            <person name="Lei Y."/>
            <person name="Levitsky A.A."/>
            <person name="Li J.H."/>
            <person name="Li Z."/>
            <person name="Liang Y."/>
            <person name="Lin X."/>
            <person name="Liu X."/>
            <person name="Mattei B."/>
            <person name="McIntosh T.C."/>
            <person name="McLeod M.P."/>
            <person name="McPherson D."/>
            <person name="Merkulov G."/>
            <person name="Milshina N.V."/>
            <person name="Mobarry C."/>
            <person name="Morris J."/>
            <person name="Moshrefi A."/>
            <person name="Mount S.M."/>
            <person name="Moy M."/>
            <person name="Murphy B."/>
            <person name="Murphy L."/>
            <person name="Muzny D.M."/>
            <person name="Nelson D.L."/>
            <person name="Nelson D.R."/>
            <person name="Nelson K.A."/>
            <person name="Nixon K."/>
            <person name="Nusskern D.R."/>
            <person name="Pacleb J.M."/>
            <person name="Palazzolo M."/>
            <person name="Pittman G.S."/>
            <person name="Pan S."/>
            <person name="Pollard J."/>
            <person name="Puri V."/>
            <person name="Reese M.G."/>
            <person name="Reinert K."/>
            <person name="Remington K."/>
            <person name="Saunders R.D.C."/>
            <person name="Scheeler F."/>
            <person name="Shen H."/>
            <person name="Shue B.C."/>
            <person name="Siden-Kiamos I."/>
            <person name="Simpson M."/>
            <person name="Skupski M.P."/>
            <person name="Smith T.J."/>
            <person name="Spier E."/>
            <person name="Spradling A.C."/>
            <person name="Stapleton M."/>
            <person name="Strong R."/>
            <person name="Sun E."/>
            <person name="Svirskas R."/>
            <person name="Tector C."/>
            <person name="Turner R."/>
            <person name="Venter E."/>
            <person name="Wang A.H."/>
            <person name="Wang X."/>
            <person name="Wang Z.-Y."/>
            <person name="Wassarman D.A."/>
            <person name="Weinstock G.M."/>
            <person name="Weissenbach J."/>
            <person name="Williams S.M."/>
            <person name="Woodage T."/>
            <person name="Worley K.C."/>
            <person name="Wu D."/>
            <person name="Yang S."/>
            <person name="Yao Q.A."/>
            <person name="Ye J."/>
            <person name="Yeh R.-F."/>
            <person name="Zaveri J.S."/>
            <person name="Zhan M."/>
            <person name="Zhang G."/>
            <person name="Zhao Q."/>
            <person name="Zheng L."/>
            <person name="Zheng X.H."/>
            <person name="Zhong F.N."/>
            <person name="Zhong W."/>
            <person name="Zhou X."/>
            <person name="Zhu S.C."/>
            <person name="Zhu X."/>
            <person name="Smith H.O."/>
            <person name="Gibbs R.A."/>
            <person name="Myers E.W."/>
            <person name="Rubin G.M."/>
            <person name="Venter J.C."/>
        </authorList>
    </citation>
    <scope>NUCLEOTIDE SEQUENCE [LARGE SCALE GENOMIC DNA]</scope>
    <source>
        <strain>Berkeley</strain>
    </source>
</reference>
<reference key="2">
    <citation type="journal article" date="2002" name="Genome Biol.">
        <title>Annotation of the Drosophila melanogaster euchromatic genome: a systematic review.</title>
        <authorList>
            <person name="Misra S."/>
            <person name="Crosby M.A."/>
            <person name="Mungall C.J."/>
            <person name="Matthews B.B."/>
            <person name="Campbell K.S."/>
            <person name="Hradecky P."/>
            <person name="Huang Y."/>
            <person name="Kaminker J.S."/>
            <person name="Millburn G.H."/>
            <person name="Prochnik S.E."/>
            <person name="Smith C.D."/>
            <person name="Tupy J.L."/>
            <person name="Whitfield E.J."/>
            <person name="Bayraktaroglu L."/>
            <person name="Berman B.P."/>
            <person name="Bettencourt B.R."/>
            <person name="Celniker S.E."/>
            <person name="de Grey A.D.N.J."/>
            <person name="Drysdale R.A."/>
            <person name="Harris N.L."/>
            <person name="Richter J."/>
            <person name="Russo S."/>
            <person name="Schroeder A.J."/>
            <person name="Shu S.Q."/>
            <person name="Stapleton M."/>
            <person name="Yamada C."/>
            <person name="Ashburner M."/>
            <person name="Gelbart W.M."/>
            <person name="Rubin G.M."/>
            <person name="Lewis S.E."/>
        </authorList>
    </citation>
    <scope>GENOME REANNOTATION</scope>
    <source>
        <strain>Berkeley</strain>
    </source>
</reference>
<reference key="3">
    <citation type="journal article" date="2002" name="Genome Biol.">
        <title>A Drosophila full-length cDNA resource.</title>
        <authorList>
            <person name="Stapleton M."/>
            <person name="Carlson J.W."/>
            <person name="Brokstein P."/>
            <person name="Yu C."/>
            <person name="Champe M."/>
            <person name="George R.A."/>
            <person name="Guarin H."/>
            <person name="Kronmiller B."/>
            <person name="Pacleb J.M."/>
            <person name="Park S."/>
            <person name="Wan K.H."/>
            <person name="Rubin G.M."/>
            <person name="Celniker S.E."/>
        </authorList>
    </citation>
    <scope>NUCLEOTIDE SEQUENCE [LARGE SCALE MRNA]</scope>
    <source>
        <strain>Berkeley</strain>
        <tissue>Embryo</tissue>
    </source>
</reference>
<reference key="4">
    <citation type="journal article" date="2002" name="Gene">
        <title>Isolation of Drosophila activin and follistatin cDNAs using novel MACH amplification protocols.</title>
        <authorList>
            <person name="Haerry T.E."/>
            <person name="O'Connor M.B."/>
        </authorList>
    </citation>
    <scope>NUCLEOTIDE SEQUENCE [MRNA] OF 209-946</scope>
    <source>
        <tissue>Embryo</tissue>
    </source>
</reference>
<reference evidence="8" key="5">
    <citation type="journal article" date="1998" name="Biochem. Biophys. Res. Commun.">
        <title>Identification of a new member of transforming growth factor-beta superfamily in Drosophila: the first invertebrate activin gene.</title>
        <authorList>
            <person name="Kutty G."/>
            <person name="Kutty R.K."/>
            <person name="Samuel W."/>
            <person name="Duncan T."/>
            <person name="Jaworski C."/>
            <person name="Wiggert B."/>
        </authorList>
    </citation>
    <scope>NUCLEOTIDE SEQUENCE [GENOMIC DNA] OF 574-946</scope>
    <scope>DEVELOPMENTAL STAGE</scope>
</reference>
<reference key="6">
    <citation type="journal article" date="2003" name="Cell">
        <title>TGF-beta signaling activates steroid hormone receptor expression during neuronal remodeling in the Drosophila brain.</title>
        <authorList>
            <person name="Zheng X."/>
            <person name="Wang J."/>
            <person name="Haerry T.E."/>
            <person name="Wu A.Y.-H."/>
            <person name="Martin J."/>
            <person name="O'Connor M.B."/>
            <person name="Lee C.-H.J."/>
            <person name="Lee T."/>
        </authorList>
    </citation>
    <scope>FUNCTION</scope>
    <scope>TISSUE SPECIFICITY</scope>
</reference>
<reference key="7">
    <citation type="journal article" date="2006" name="Development">
        <title>The metalloprotease tolloid-related and its TGF-beta-like substrate Dawdle regulate Drosophila motoneuron axon guidance.</title>
        <authorList>
            <person name="Serpe M."/>
            <person name="O'Connor M.B."/>
        </authorList>
    </citation>
    <scope>PROTEOLYTIC CLEAVAGE</scope>
    <scope>MUTAGENESIS OF 583-TYR--ASP-586</scope>
</reference>
<reference key="8">
    <citation type="journal article" date="2008" name="Development">
        <title>Drosophila Activin- and the Activin-like product Dawdle function redundantly to regulate proliferation in the larval brain.</title>
        <authorList>
            <person name="Zhu C.C."/>
            <person name="Boone J.Q."/>
            <person name="Jensen P.A."/>
            <person name="Hanna S."/>
            <person name="Podemski L."/>
            <person name="Locke J."/>
            <person name="Doe C.Q."/>
            <person name="O'Connor M.B."/>
        </authorList>
    </citation>
    <scope>FUNCTION</scope>
    <scope>TISSUE SPECIFICITY</scope>
    <scope>DISRUPTION PHENOTYPE</scope>
</reference>